<accession>A9IQQ9</accession>
<keyword id="KW-0004">4Fe-4S</keyword>
<keyword id="KW-0408">Iron</keyword>
<keyword id="KW-0411">Iron-sulfur</keyword>
<keyword id="KW-0414">Isoprene biosynthesis</keyword>
<keyword id="KW-0479">Metal-binding</keyword>
<keyword id="KW-0560">Oxidoreductase</keyword>
<proteinExistence type="inferred from homology"/>
<organism>
    <name type="scientific">Bartonella tribocorum (strain CIP 105476 / IBS 506)</name>
    <dbReference type="NCBI Taxonomy" id="382640"/>
    <lineage>
        <taxon>Bacteria</taxon>
        <taxon>Pseudomonadati</taxon>
        <taxon>Pseudomonadota</taxon>
        <taxon>Alphaproteobacteria</taxon>
        <taxon>Hyphomicrobiales</taxon>
        <taxon>Bartonellaceae</taxon>
        <taxon>Bartonella</taxon>
    </lineage>
</organism>
<reference key="1">
    <citation type="journal article" date="2007" name="Nat. Genet.">
        <title>Genomic analysis of Bartonella identifies type IV secretion systems as host adaptability factors.</title>
        <authorList>
            <person name="Saenz H.L."/>
            <person name="Engel P."/>
            <person name="Stoeckli M.C."/>
            <person name="Lanz C."/>
            <person name="Raddatz G."/>
            <person name="Vayssier-Taussat M."/>
            <person name="Birtles R."/>
            <person name="Schuster S.C."/>
            <person name="Dehio C."/>
        </authorList>
    </citation>
    <scope>NUCLEOTIDE SEQUENCE [LARGE SCALE GENOMIC DNA]</scope>
    <source>
        <strain>CIP 105476 / IBS 506</strain>
    </source>
</reference>
<evidence type="ECO:0000255" key="1">
    <source>
        <dbReference type="HAMAP-Rule" id="MF_00191"/>
    </source>
</evidence>
<name>ISPH_BART1</name>
<comment type="function">
    <text evidence="1">Catalyzes the conversion of 1-hydroxy-2-methyl-2-(E)-butenyl 4-diphosphate (HMBPP) into a mixture of isopentenyl diphosphate (IPP) and dimethylallyl diphosphate (DMAPP). Acts in the terminal step of the DOXP/MEP pathway for isoprenoid precursor biosynthesis.</text>
</comment>
<comment type="catalytic activity">
    <reaction evidence="1">
        <text>isopentenyl diphosphate + 2 oxidized [2Fe-2S]-[ferredoxin] + H2O = (2E)-4-hydroxy-3-methylbut-2-enyl diphosphate + 2 reduced [2Fe-2S]-[ferredoxin] + 2 H(+)</text>
        <dbReference type="Rhea" id="RHEA:24488"/>
        <dbReference type="Rhea" id="RHEA-COMP:10000"/>
        <dbReference type="Rhea" id="RHEA-COMP:10001"/>
        <dbReference type="ChEBI" id="CHEBI:15377"/>
        <dbReference type="ChEBI" id="CHEBI:15378"/>
        <dbReference type="ChEBI" id="CHEBI:33737"/>
        <dbReference type="ChEBI" id="CHEBI:33738"/>
        <dbReference type="ChEBI" id="CHEBI:128753"/>
        <dbReference type="ChEBI" id="CHEBI:128769"/>
        <dbReference type="EC" id="1.17.7.4"/>
    </reaction>
</comment>
<comment type="catalytic activity">
    <reaction evidence="1">
        <text>dimethylallyl diphosphate + 2 oxidized [2Fe-2S]-[ferredoxin] + H2O = (2E)-4-hydroxy-3-methylbut-2-enyl diphosphate + 2 reduced [2Fe-2S]-[ferredoxin] + 2 H(+)</text>
        <dbReference type="Rhea" id="RHEA:24825"/>
        <dbReference type="Rhea" id="RHEA-COMP:10000"/>
        <dbReference type="Rhea" id="RHEA-COMP:10001"/>
        <dbReference type="ChEBI" id="CHEBI:15377"/>
        <dbReference type="ChEBI" id="CHEBI:15378"/>
        <dbReference type="ChEBI" id="CHEBI:33737"/>
        <dbReference type="ChEBI" id="CHEBI:33738"/>
        <dbReference type="ChEBI" id="CHEBI:57623"/>
        <dbReference type="ChEBI" id="CHEBI:128753"/>
        <dbReference type="EC" id="1.17.7.4"/>
    </reaction>
</comment>
<comment type="cofactor">
    <cofactor evidence="1">
        <name>[4Fe-4S] cluster</name>
        <dbReference type="ChEBI" id="CHEBI:49883"/>
    </cofactor>
    <text evidence="1">Binds 1 [4Fe-4S] cluster per subunit.</text>
</comment>
<comment type="pathway">
    <text evidence="1">Isoprenoid biosynthesis; dimethylallyl diphosphate biosynthesis; dimethylallyl diphosphate from (2E)-4-hydroxy-3-methylbutenyl diphosphate: step 1/1.</text>
</comment>
<comment type="pathway">
    <text evidence="1">Isoprenoid biosynthesis; isopentenyl diphosphate biosynthesis via DXP pathway; isopentenyl diphosphate from 1-deoxy-D-xylulose 5-phosphate: step 6/6.</text>
</comment>
<comment type="similarity">
    <text evidence="1">Belongs to the IspH family.</text>
</comment>
<feature type="chain" id="PRO_1000077513" description="4-hydroxy-3-methylbut-2-enyl diphosphate reductase">
    <location>
        <begin position="1"/>
        <end position="351"/>
    </location>
</feature>
<feature type="active site" description="Proton donor" evidence="1">
    <location>
        <position position="135"/>
    </location>
</feature>
<feature type="binding site" evidence="1">
    <location>
        <position position="18"/>
    </location>
    <ligand>
        <name>[4Fe-4S] cluster</name>
        <dbReference type="ChEBI" id="CHEBI:49883"/>
    </ligand>
</feature>
<feature type="binding site" evidence="1">
    <location>
        <position position="47"/>
    </location>
    <ligand>
        <name>(2E)-4-hydroxy-3-methylbut-2-enyl diphosphate</name>
        <dbReference type="ChEBI" id="CHEBI:128753"/>
    </ligand>
</feature>
<feature type="binding site" evidence="1">
    <location>
        <position position="47"/>
    </location>
    <ligand>
        <name>dimethylallyl diphosphate</name>
        <dbReference type="ChEBI" id="CHEBI:57623"/>
    </ligand>
</feature>
<feature type="binding site" evidence="1">
    <location>
        <position position="47"/>
    </location>
    <ligand>
        <name>isopentenyl diphosphate</name>
        <dbReference type="ChEBI" id="CHEBI:128769"/>
    </ligand>
</feature>
<feature type="binding site" evidence="1">
    <location>
        <position position="83"/>
    </location>
    <ligand>
        <name>(2E)-4-hydroxy-3-methylbut-2-enyl diphosphate</name>
        <dbReference type="ChEBI" id="CHEBI:128753"/>
    </ligand>
</feature>
<feature type="binding site" evidence="1">
    <location>
        <position position="83"/>
    </location>
    <ligand>
        <name>dimethylallyl diphosphate</name>
        <dbReference type="ChEBI" id="CHEBI:57623"/>
    </ligand>
</feature>
<feature type="binding site" evidence="1">
    <location>
        <position position="83"/>
    </location>
    <ligand>
        <name>isopentenyl diphosphate</name>
        <dbReference type="ChEBI" id="CHEBI:128769"/>
    </ligand>
</feature>
<feature type="binding site" evidence="1">
    <location>
        <position position="105"/>
    </location>
    <ligand>
        <name>[4Fe-4S] cluster</name>
        <dbReference type="ChEBI" id="CHEBI:49883"/>
    </ligand>
</feature>
<feature type="binding site" evidence="1">
    <location>
        <position position="133"/>
    </location>
    <ligand>
        <name>(2E)-4-hydroxy-3-methylbut-2-enyl diphosphate</name>
        <dbReference type="ChEBI" id="CHEBI:128753"/>
    </ligand>
</feature>
<feature type="binding site" evidence="1">
    <location>
        <position position="133"/>
    </location>
    <ligand>
        <name>dimethylallyl diphosphate</name>
        <dbReference type="ChEBI" id="CHEBI:57623"/>
    </ligand>
</feature>
<feature type="binding site" evidence="1">
    <location>
        <position position="133"/>
    </location>
    <ligand>
        <name>isopentenyl diphosphate</name>
        <dbReference type="ChEBI" id="CHEBI:128769"/>
    </ligand>
</feature>
<feature type="binding site" evidence="1">
    <location>
        <position position="174"/>
    </location>
    <ligand>
        <name>(2E)-4-hydroxy-3-methylbut-2-enyl diphosphate</name>
        <dbReference type="ChEBI" id="CHEBI:128753"/>
    </ligand>
</feature>
<feature type="binding site" evidence="1">
    <location>
        <position position="204"/>
    </location>
    <ligand>
        <name>[4Fe-4S] cluster</name>
        <dbReference type="ChEBI" id="CHEBI:49883"/>
    </ligand>
</feature>
<feature type="binding site" evidence="1">
    <location>
        <position position="232"/>
    </location>
    <ligand>
        <name>(2E)-4-hydroxy-3-methylbut-2-enyl diphosphate</name>
        <dbReference type="ChEBI" id="CHEBI:128753"/>
    </ligand>
</feature>
<feature type="binding site" evidence="1">
    <location>
        <position position="232"/>
    </location>
    <ligand>
        <name>dimethylallyl diphosphate</name>
        <dbReference type="ChEBI" id="CHEBI:57623"/>
    </ligand>
</feature>
<feature type="binding site" evidence="1">
    <location>
        <position position="232"/>
    </location>
    <ligand>
        <name>isopentenyl diphosphate</name>
        <dbReference type="ChEBI" id="CHEBI:128769"/>
    </ligand>
</feature>
<feature type="binding site" evidence="1">
    <location>
        <position position="233"/>
    </location>
    <ligand>
        <name>(2E)-4-hydroxy-3-methylbut-2-enyl diphosphate</name>
        <dbReference type="ChEBI" id="CHEBI:128753"/>
    </ligand>
</feature>
<feature type="binding site" evidence="1">
    <location>
        <position position="233"/>
    </location>
    <ligand>
        <name>dimethylallyl diphosphate</name>
        <dbReference type="ChEBI" id="CHEBI:57623"/>
    </ligand>
</feature>
<feature type="binding site" evidence="1">
    <location>
        <position position="233"/>
    </location>
    <ligand>
        <name>isopentenyl diphosphate</name>
        <dbReference type="ChEBI" id="CHEBI:128769"/>
    </ligand>
</feature>
<feature type="binding site" evidence="1">
    <location>
        <position position="234"/>
    </location>
    <ligand>
        <name>(2E)-4-hydroxy-3-methylbut-2-enyl diphosphate</name>
        <dbReference type="ChEBI" id="CHEBI:128753"/>
    </ligand>
</feature>
<feature type="binding site" evidence="1">
    <location>
        <position position="234"/>
    </location>
    <ligand>
        <name>dimethylallyl diphosphate</name>
        <dbReference type="ChEBI" id="CHEBI:57623"/>
    </ligand>
</feature>
<feature type="binding site" evidence="1">
    <location>
        <position position="234"/>
    </location>
    <ligand>
        <name>isopentenyl diphosphate</name>
        <dbReference type="ChEBI" id="CHEBI:128769"/>
    </ligand>
</feature>
<feature type="binding site" evidence="1">
    <location>
        <position position="277"/>
    </location>
    <ligand>
        <name>(2E)-4-hydroxy-3-methylbut-2-enyl diphosphate</name>
        <dbReference type="ChEBI" id="CHEBI:128753"/>
    </ligand>
</feature>
<feature type="binding site" evidence="1">
    <location>
        <position position="277"/>
    </location>
    <ligand>
        <name>dimethylallyl diphosphate</name>
        <dbReference type="ChEBI" id="CHEBI:57623"/>
    </ligand>
</feature>
<feature type="binding site" evidence="1">
    <location>
        <position position="277"/>
    </location>
    <ligand>
        <name>isopentenyl diphosphate</name>
        <dbReference type="ChEBI" id="CHEBI:128769"/>
    </ligand>
</feature>
<protein>
    <recommendedName>
        <fullName evidence="1">4-hydroxy-3-methylbut-2-enyl diphosphate reductase</fullName>
        <shortName evidence="1">HMBPP reductase</shortName>
        <ecNumber evidence="1">1.17.7.4</ecNumber>
    </recommendedName>
</protein>
<dbReference type="EC" id="1.17.7.4" evidence="1"/>
<dbReference type="EMBL" id="AM260525">
    <property type="protein sequence ID" value="CAK01089.1"/>
    <property type="molecule type" value="Genomic_DNA"/>
</dbReference>
<dbReference type="RefSeq" id="WP_012231194.1">
    <property type="nucleotide sequence ID" value="NC_010161.1"/>
</dbReference>
<dbReference type="SMR" id="A9IQQ9"/>
<dbReference type="KEGG" id="btr:BT_0655"/>
<dbReference type="eggNOG" id="COG0761">
    <property type="taxonomic scope" value="Bacteria"/>
</dbReference>
<dbReference type="HOGENOM" id="CLU_027486_1_0_5"/>
<dbReference type="UniPathway" id="UPA00056">
    <property type="reaction ID" value="UER00097"/>
</dbReference>
<dbReference type="UniPathway" id="UPA00059">
    <property type="reaction ID" value="UER00105"/>
</dbReference>
<dbReference type="Proteomes" id="UP000001592">
    <property type="component" value="Chromosome"/>
</dbReference>
<dbReference type="GO" id="GO:0051539">
    <property type="term" value="F:4 iron, 4 sulfur cluster binding"/>
    <property type="evidence" value="ECO:0007669"/>
    <property type="project" value="UniProtKB-UniRule"/>
</dbReference>
<dbReference type="GO" id="GO:0051745">
    <property type="term" value="F:4-hydroxy-3-methylbut-2-enyl diphosphate reductase activity"/>
    <property type="evidence" value="ECO:0007669"/>
    <property type="project" value="UniProtKB-UniRule"/>
</dbReference>
<dbReference type="GO" id="GO:0046872">
    <property type="term" value="F:metal ion binding"/>
    <property type="evidence" value="ECO:0007669"/>
    <property type="project" value="UniProtKB-KW"/>
</dbReference>
<dbReference type="GO" id="GO:0050992">
    <property type="term" value="P:dimethylallyl diphosphate biosynthetic process"/>
    <property type="evidence" value="ECO:0007669"/>
    <property type="project" value="UniProtKB-UniRule"/>
</dbReference>
<dbReference type="GO" id="GO:0019288">
    <property type="term" value="P:isopentenyl diphosphate biosynthetic process, methylerythritol 4-phosphate pathway"/>
    <property type="evidence" value="ECO:0007669"/>
    <property type="project" value="UniProtKB-UniRule"/>
</dbReference>
<dbReference type="GO" id="GO:0016114">
    <property type="term" value="P:terpenoid biosynthetic process"/>
    <property type="evidence" value="ECO:0007669"/>
    <property type="project" value="UniProtKB-UniRule"/>
</dbReference>
<dbReference type="CDD" id="cd13944">
    <property type="entry name" value="lytB_ispH"/>
    <property type="match status" value="1"/>
</dbReference>
<dbReference type="Gene3D" id="3.40.50.11270">
    <property type="match status" value="1"/>
</dbReference>
<dbReference type="Gene3D" id="3.40.1010.20">
    <property type="entry name" value="4-hydroxy-3-methylbut-2-enyl diphosphate reductase, catalytic domain"/>
    <property type="match status" value="2"/>
</dbReference>
<dbReference type="HAMAP" id="MF_00191">
    <property type="entry name" value="IspH"/>
    <property type="match status" value="1"/>
</dbReference>
<dbReference type="InterPro" id="IPR003451">
    <property type="entry name" value="LytB/IspH"/>
</dbReference>
<dbReference type="NCBIfam" id="TIGR00216">
    <property type="entry name" value="ispH_lytB"/>
    <property type="match status" value="1"/>
</dbReference>
<dbReference type="NCBIfam" id="NF002190">
    <property type="entry name" value="PRK01045.1-4"/>
    <property type="match status" value="1"/>
</dbReference>
<dbReference type="PANTHER" id="PTHR30426">
    <property type="entry name" value="4-HYDROXY-3-METHYLBUT-2-ENYL DIPHOSPHATE REDUCTASE"/>
    <property type="match status" value="1"/>
</dbReference>
<dbReference type="PANTHER" id="PTHR30426:SF0">
    <property type="entry name" value="4-HYDROXY-3-METHYLBUT-2-ENYL DIPHOSPHATE REDUCTASE"/>
    <property type="match status" value="1"/>
</dbReference>
<dbReference type="Pfam" id="PF02401">
    <property type="entry name" value="LYTB"/>
    <property type="match status" value="1"/>
</dbReference>
<sequence>MSGLPPLTIRLCGPRGFCAGVDRAIQIVLLALKKYSAPVYVRHEIVHNRYVVEGLQQRGAVFVEELDEIPEEHRNQPVVFSAHGVPKSVSEEARRYNLFYLDATCPLVSKVHKQAIRHQRHGRHVILIGHAGHPEVIGTMGQLEDGAVTLIETIEDALHYQPGDPDKLGFVTQTTLSVEDTAGILDVLQQRFPTLAAPAAESICYATTNRQDAVKAAAKGSDLFLIVGAPNSSNSRRLVEVAEKSGARQAILVQRADEINFENLKALSVVSLSAGASAPEIIIDEIISAFRARYNVTIELAETVVETERFLVSRELRDVILTSQDMAFVNGQANNAKNENQNTDMFTTKAE</sequence>
<gene>
    <name evidence="1" type="primary">ispH</name>
    <name type="ordered locus">BT_0655</name>
</gene>